<sequence length="405" mass="44853">MKRPIYLDYAATTPVDPQVAERMMECLTFDGTFGNAASRSHAYGWQAEEKVEYAREQVANLIKADPREIVWTSGATESDNLALKGVAQFYASKGKHIITSKIEHKAVLDPCRELEEQGFEITYLEPEPQTGLITPEMVKAALRPDTILVSLMMVNNEIGTVTDVAAIGELTRANKTFFHVDAAQAAGKVDIDLSTMKIDLMSFSAHKIYGPKGIGALYVRRSPRVRLKAQIHGGGHERGMRSGTLATHQIVGMGEAFELAGKTMHAEQERIRKLRDKLWNGLQDLEQVFLNGHPTQNVANYLNVSFNFVEGESLMMSLKDAAVSSGSACTSATLEPSYVLRALGLSDELAHSSIRFSFGKYTTEEDIDHVLTITKAAVEKLRELSPLWDMYKEGIDLSTVEWAEH</sequence>
<protein>
    <recommendedName>
        <fullName evidence="1">Cysteine desulfurase IscS</fullName>
        <ecNumber evidence="1">2.8.1.7</ecNumber>
    </recommendedName>
</protein>
<proteinExistence type="inferred from homology"/>
<name>ISCS_ACIBC</name>
<comment type="function">
    <text evidence="1">Master enzyme that delivers sulfur to a number of partners involved in Fe-S cluster assembly, tRNA modification or cofactor biosynthesis. Catalyzes the removal of elemental sulfur atoms from cysteine to produce alanine. Functions as a sulfur delivery protein for Fe-S cluster synthesis onto IscU, an Fe-S scaffold assembly protein, as well as other S acceptor proteins.</text>
</comment>
<comment type="catalytic activity">
    <reaction evidence="1">
        <text>(sulfur carrier)-H + L-cysteine = (sulfur carrier)-SH + L-alanine</text>
        <dbReference type="Rhea" id="RHEA:43892"/>
        <dbReference type="Rhea" id="RHEA-COMP:14737"/>
        <dbReference type="Rhea" id="RHEA-COMP:14739"/>
        <dbReference type="ChEBI" id="CHEBI:29917"/>
        <dbReference type="ChEBI" id="CHEBI:35235"/>
        <dbReference type="ChEBI" id="CHEBI:57972"/>
        <dbReference type="ChEBI" id="CHEBI:64428"/>
        <dbReference type="EC" id="2.8.1.7"/>
    </reaction>
</comment>
<comment type="cofactor">
    <cofactor evidence="1">
        <name>pyridoxal 5'-phosphate</name>
        <dbReference type="ChEBI" id="CHEBI:597326"/>
    </cofactor>
</comment>
<comment type="pathway">
    <text evidence="1">Cofactor biosynthesis; iron-sulfur cluster biosynthesis.</text>
</comment>
<comment type="subunit">
    <text evidence="1">Homodimer. Forms a heterotetramer with IscU, interacts with other sulfur acceptors.</text>
</comment>
<comment type="subcellular location">
    <subcellularLocation>
        <location evidence="1">Cytoplasm</location>
    </subcellularLocation>
</comment>
<comment type="similarity">
    <text evidence="1">Belongs to the class-V pyridoxal-phosphate-dependent aminotransferase family. NifS/IscS subfamily.</text>
</comment>
<evidence type="ECO:0000255" key="1">
    <source>
        <dbReference type="HAMAP-Rule" id="MF_00331"/>
    </source>
</evidence>
<accession>B2HZI5</accession>
<organism>
    <name type="scientific">Acinetobacter baumannii (strain ACICU)</name>
    <dbReference type="NCBI Taxonomy" id="405416"/>
    <lineage>
        <taxon>Bacteria</taxon>
        <taxon>Pseudomonadati</taxon>
        <taxon>Pseudomonadota</taxon>
        <taxon>Gammaproteobacteria</taxon>
        <taxon>Moraxellales</taxon>
        <taxon>Moraxellaceae</taxon>
        <taxon>Acinetobacter</taxon>
        <taxon>Acinetobacter calcoaceticus/baumannii complex</taxon>
    </lineage>
</organism>
<keyword id="KW-0001">2Fe-2S</keyword>
<keyword id="KW-0963">Cytoplasm</keyword>
<keyword id="KW-0408">Iron</keyword>
<keyword id="KW-0411">Iron-sulfur</keyword>
<keyword id="KW-0479">Metal-binding</keyword>
<keyword id="KW-0663">Pyridoxal phosphate</keyword>
<keyword id="KW-0808">Transferase</keyword>
<reference key="1">
    <citation type="journal article" date="2008" name="Antimicrob. Agents Chemother.">
        <title>Whole-genome pyrosequencing of an epidemic multidrug-resistant Acinetobacter baumannii strain belonging to the European clone II group.</title>
        <authorList>
            <person name="Iacono M."/>
            <person name="Villa L."/>
            <person name="Fortini D."/>
            <person name="Bordoni R."/>
            <person name="Imperi F."/>
            <person name="Bonnal R.J."/>
            <person name="Sicheritz-Ponten T."/>
            <person name="De Bellis G."/>
            <person name="Visca P."/>
            <person name="Cassone A."/>
            <person name="Carattoli A."/>
        </authorList>
    </citation>
    <scope>NUCLEOTIDE SEQUENCE [LARGE SCALE GENOMIC DNA]</scope>
    <source>
        <strain>ACICU</strain>
    </source>
</reference>
<gene>
    <name evidence="1" type="primary">iscS</name>
    <name type="ordered locus">ACICU_01659</name>
</gene>
<feature type="chain" id="PRO_1000119616" description="Cysteine desulfurase IscS">
    <location>
        <begin position="1"/>
        <end position="405"/>
    </location>
</feature>
<feature type="active site" description="Cysteine persulfide intermediate" evidence="1">
    <location>
        <position position="329"/>
    </location>
</feature>
<feature type="binding site" evidence="1">
    <location>
        <begin position="75"/>
        <end position="76"/>
    </location>
    <ligand>
        <name>pyridoxal 5'-phosphate</name>
        <dbReference type="ChEBI" id="CHEBI:597326"/>
    </ligand>
</feature>
<feature type="binding site" evidence="1">
    <location>
        <position position="156"/>
    </location>
    <ligand>
        <name>pyridoxal 5'-phosphate</name>
        <dbReference type="ChEBI" id="CHEBI:597326"/>
    </ligand>
</feature>
<feature type="binding site" evidence="1">
    <location>
        <position position="184"/>
    </location>
    <ligand>
        <name>pyridoxal 5'-phosphate</name>
        <dbReference type="ChEBI" id="CHEBI:597326"/>
    </ligand>
</feature>
<feature type="binding site" evidence="1">
    <location>
        <begin position="204"/>
        <end position="206"/>
    </location>
    <ligand>
        <name>pyridoxal 5'-phosphate</name>
        <dbReference type="ChEBI" id="CHEBI:597326"/>
    </ligand>
</feature>
<feature type="binding site" evidence="1">
    <location>
        <position position="244"/>
    </location>
    <ligand>
        <name>pyridoxal 5'-phosphate</name>
        <dbReference type="ChEBI" id="CHEBI:597326"/>
    </ligand>
</feature>
<feature type="binding site" description="via persulfide group" evidence="1">
    <location>
        <position position="329"/>
    </location>
    <ligand>
        <name>[2Fe-2S] cluster</name>
        <dbReference type="ChEBI" id="CHEBI:190135"/>
        <note>ligand shared with IscU</note>
    </ligand>
</feature>
<feature type="modified residue" description="N6-(pyridoxal phosphate)lysine" evidence="1">
    <location>
        <position position="207"/>
    </location>
</feature>
<dbReference type="EC" id="2.8.1.7" evidence="1"/>
<dbReference type="EMBL" id="CP000863">
    <property type="protein sequence ID" value="ACC56971.1"/>
    <property type="molecule type" value="Genomic_DNA"/>
</dbReference>
<dbReference type="RefSeq" id="WP_000828390.1">
    <property type="nucleotide sequence ID" value="NZ_CP031380.1"/>
</dbReference>
<dbReference type="SMR" id="B2HZI5"/>
<dbReference type="KEGG" id="abc:ACICU_01659"/>
<dbReference type="HOGENOM" id="CLU_003433_0_2_6"/>
<dbReference type="UniPathway" id="UPA00266"/>
<dbReference type="Proteomes" id="UP000008839">
    <property type="component" value="Chromosome"/>
</dbReference>
<dbReference type="GO" id="GO:1990221">
    <property type="term" value="C:L-cysteine desulfurase complex"/>
    <property type="evidence" value="ECO:0007669"/>
    <property type="project" value="UniProtKB-ARBA"/>
</dbReference>
<dbReference type="GO" id="GO:0051537">
    <property type="term" value="F:2 iron, 2 sulfur cluster binding"/>
    <property type="evidence" value="ECO:0007669"/>
    <property type="project" value="UniProtKB-UniRule"/>
</dbReference>
<dbReference type="GO" id="GO:0031071">
    <property type="term" value="F:cysteine desulfurase activity"/>
    <property type="evidence" value="ECO:0007669"/>
    <property type="project" value="UniProtKB-UniRule"/>
</dbReference>
<dbReference type="GO" id="GO:0046872">
    <property type="term" value="F:metal ion binding"/>
    <property type="evidence" value="ECO:0007669"/>
    <property type="project" value="UniProtKB-KW"/>
</dbReference>
<dbReference type="GO" id="GO:0030170">
    <property type="term" value="F:pyridoxal phosphate binding"/>
    <property type="evidence" value="ECO:0007669"/>
    <property type="project" value="UniProtKB-UniRule"/>
</dbReference>
<dbReference type="GO" id="GO:0044571">
    <property type="term" value="P:[2Fe-2S] cluster assembly"/>
    <property type="evidence" value="ECO:0007669"/>
    <property type="project" value="UniProtKB-UniRule"/>
</dbReference>
<dbReference type="FunFam" id="3.40.640.10:FF:000003">
    <property type="entry name" value="Cysteine desulfurase IscS"/>
    <property type="match status" value="1"/>
</dbReference>
<dbReference type="FunFam" id="3.90.1150.10:FF:000002">
    <property type="entry name" value="Cysteine desulfurase IscS"/>
    <property type="match status" value="1"/>
</dbReference>
<dbReference type="Gene3D" id="3.90.1150.10">
    <property type="entry name" value="Aspartate Aminotransferase, domain 1"/>
    <property type="match status" value="1"/>
</dbReference>
<dbReference type="Gene3D" id="3.40.640.10">
    <property type="entry name" value="Type I PLP-dependent aspartate aminotransferase-like (Major domain)"/>
    <property type="match status" value="1"/>
</dbReference>
<dbReference type="HAMAP" id="MF_00331">
    <property type="entry name" value="Cys_desulf_IscS"/>
    <property type="match status" value="1"/>
</dbReference>
<dbReference type="InterPro" id="IPR000192">
    <property type="entry name" value="Aminotrans_V_dom"/>
</dbReference>
<dbReference type="InterPro" id="IPR020578">
    <property type="entry name" value="Aminotrans_V_PyrdxlP_BS"/>
</dbReference>
<dbReference type="InterPro" id="IPR010240">
    <property type="entry name" value="Cys_deSase_IscS"/>
</dbReference>
<dbReference type="InterPro" id="IPR016454">
    <property type="entry name" value="Cysteine_dSase"/>
</dbReference>
<dbReference type="InterPro" id="IPR015424">
    <property type="entry name" value="PyrdxlP-dep_Trfase"/>
</dbReference>
<dbReference type="InterPro" id="IPR015421">
    <property type="entry name" value="PyrdxlP-dep_Trfase_major"/>
</dbReference>
<dbReference type="InterPro" id="IPR015422">
    <property type="entry name" value="PyrdxlP-dep_Trfase_small"/>
</dbReference>
<dbReference type="NCBIfam" id="TIGR02006">
    <property type="entry name" value="IscS"/>
    <property type="match status" value="1"/>
</dbReference>
<dbReference type="NCBIfam" id="NF010611">
    <property type="entry name" value="PRK14012.1"/>
    <property type="match status" value="1"/>
</dbReference>
<dbReference type="PANTHER" id="PTHR11601:SF34">
    <property type="entry name" value="CYSTEINE DESULFURASE"/>
    <property type="match status" value="1"/>
</dbReference>
<dbReference type="PANTHER" id="PTHR11601">
    <property type="entry name" value="CYSTEINE DESULFURYLASE FAMILY MEMBER"/>
    <property type="match status" value="1"/>
</dbReference>
<dbReference type="Pfam" id="PF00266">
    <property type="entry name" value="Aminotran_5"/>
    <property type="match status" value="1"/>
</dbReference>
<dbReference type="PIRSF" id="PIRSF005572">
    <property type="entry name" value="NifS"/>
    <property type="match status" value="1"/>
</dbReference>
<dbReference type="SUPFAM" id="SSF53383">
    <property type="entry name" value="PLP-dependent transferases"/>
    <property type="match status" value="1"/>
</dbReference>
<dbReference type="PROSITE" id="PS00595">
    <property type="entry name" value="AA_TRANSFER_CLASS_5"/>
    <property type="match status" value="1"/>
</dbReference>